<dbReference type="EC" id="3.1.-.-" evidence="1"/>
<dbReference type="EC" id="5.6.2.4" evidence="1"/>
<dbReference type="EMBL" id="BA000017">
    <property type="protein sequence ID" value="BAB57129.1"/>
    <property type="molecule type" value="Genomic_DNA"/>
</dbReference>
<dbReference type="RefSeq" id="WP_000154921.1">
    <property type="nucleotide sequence ID" value="NC_002758.2"/>
</dbReference>
<dbReference type="SMR" id="Q99VC3"/>
<dbReference type="KEGG" id="sav:SAV0967"/>
<dbReference type="HOGENOM" id="CLU_001114_3_1_9"/>
<dbReference type="PhylomeDB" id="Q99VC3"/>
<dbReference type="Proteomes" id="UP000002481">
    <property type="component" value="Chromosome"/>
</dbReference>
<dbReference type="GO" id="GO:0005829">
    <property type="term" value="C:cytosol"/>
    <property type="evidence" value="ECO:0007669"/>
    <property type="project" value="TreeGrafter"/>
</dbReference>
<dbReference type="GO" id="GO:0033202">
    <property type="term" value="C:DNA helicase complex"/>
    <property type="evidence" value="ECO:0007669"/>
    <property type="project" value="TreeGrafter"/>
</dbReference>
<dbReference type="GO" id="GO:0043138">
    <property type="term" value="F:3'-5' DNA helicase activity"/>
    <property type="evidence" value="ECO:0007669"/>
    <property type="project" value="UniProtKB-UniRule"/>
</dbReference>
<dbReference type="GO" id="GO:0008408">
    <property type="term" value="F:3'-5' exonuclease activity"/>
    <property type="evidence" value="ECO:0007669"/>
    <property type="project" value="UniProtKB-UniRule"/>
</dbReference>
<dbReference type="GO" id="GO:0005524">
    <property type="term" value="F:ATP binding"/>
    <property type="evidence" value="ECO:0007669"/>
    <property type="project" value="UniProtKB-UniRule"/>
</dbReference>
<dbReference type="GO" id="GO:0016887">
    <property type="term" value="F:ATP hydrolysis activity"/>
    <property type="evidence" value="ECO:0007669"/>
    <property type="project" value="RHEA"/>
</dbReference>
<dbReference type="GO" id="GO:0003690">
    <property type="term" value="F:double-stranded DNA binding"/>
    <property type="evidence" value="ECO:0007669"/>
    <property type="project" value="UniProtKB-UniRule"/>
</dbReference>
<dbReference type="GO" id="GO:0000724">
    <property type="term" value="P:double-strand break repair via homologous recombination"/>
    <property type="evidence" value="ECO:0007669"/>
    <property type="project" value="UniProtKB-UniRule"/>
</dbReference>
<dbReference type="CDD" id="cd17932">
    <property type="entry name" value="DEXQc_UvrD"/>
    <property type="match status" value="2"/>
</dbReference>
<dbReference type="FunFam" id="3.40.50.300:FF:001196">
    <property type="entry name" value="ATP-dependent helicase/nuclease subunit A"/>
    <property type="match status" value="1"/>
</dbReference>
<dbReference type="FunFam" id="3.40.50.300:FF:001715">
    <property type="entry name" value="ATP-dependent helicase/nuclease subunit A"/>
    <property type="match status" value="1"/>
</dbReference>
<dbReference type="Gene3D" id="3.90.320.10">
    <property type="match status" value="1"/>
</dbReference>
<dbReference type="Gene3D" id="3.40.50.300">
    <property type="entry name" value="P-loop containing nucleotide triphosphate hydrolases"/>
    <property type="match status" value="4"/>
</dbReference>
<dbReference type="Gene3D" id="1.10.486.10">
    <property type="entry name" value="PCRA, domain 4"/>
    <property type="match status" value="1"/>
</dbReference>
<dbReference type="HAMAP" id="MF_01451">
    <property type="entry name" value="AddA"/>
    <property type="match status" value="1"/>
</dbReference>
<dbReference type="InterPro" id="IPR014152">
    <property type="entry name" value="AddA"/>
</dbReference>
<dbReference type="InterPro" id="IPR014017">
    <property type="entry name" value="DNA_helicase_UvrD-like_C"/>
</dbReference>
<dbReference type="InterPro" id="IPR000212">
    <property type="entry name" value="DNA_helicase_UvrD/REP"/>
</dbReference>
<dbReference type="InterPro" id="IPR027417">
    <property type="entry name" value="P-loop_NTPase"/>
</dbReference>
<dbReference type="InterPro" id="IPR011604">
    <property type="entry name" value="PDDEXK-like_dom_sf"/>
</dbReference>
<dbReference type="InterPro" id="IPR038726">
    <property type="entry name" value="PDDEXK_AddAB-type"/>
</dbReference>
<dbReference type="InterPro" id="IPR011335">
    <property type="entry name" value="Restrct_endonuc-II-like"/>
</dbReference>
<dbReference type="InterPro" id="IPR014016">
    <property type="entry name" value="UvrD-like_ATP-bd"/>
</dbReference>
<dbReference type="NCBIfam" id="TIGR02785">
    <property type="entry name" value="addA_Gpos"/>
    <property type="match status" value="1"/>
</dbReference>
<dbReference type="PANTHER" id="PTHR11070:SF48">
    <property type="entry name" value="ATP-DEPENDENT HELICASE_NUCLEASE SUBUNIT A"/>
    <property type="match status" value="1"/>
</dbReference>
<dbReference type="PANTHER" id="PTHR11070">
    <property type="entry name" value="UVRD / RECB / PCRA DNA HELICASE FAMILY MEMBER"/>
    <property type="match status" value="1"/>
</dbReference>
<dbReference type="Pfam" id="PF12705">
    <property type="entry name" value="PDDEXK_1"/>
    <property type="match status" value="1"/>
</dbReference>
<dbReference type="Pfam" id="PF00580">
    <property type="entry name" value="UvrD-helicase"/>
    <property type="match status" value="1"/>
</dbReference>
<dbReference type="Pfam" id="PF13361">
    <property type="entry name" value="UvrD_C"/>
    <property type="match status" value="1"/>
</dbReference>
<dbReference type="SUPFAM" id="SSF52540">
    <property type="entry name" value="P-loop containing nucleoside triphosphate hydrolases"/>
    <property type="match status" value="1"/>
</dbReference>
<dbReference type="SUPFAM" id="SSF52980">
    <property type="entry name" value="Restriction endonuclease-like"/>
    <property type="match status" value="1"/>
</dbReference>
<dbReference type="PROSITE" id="PS51198">
    <property type="entry name" value="UVRD_HELICASE_ATP_BIND"/>
    <property type="match status" value="1"/>
</dbReference>
<dbReference type="PROSITE" id="PS51217">
    <property type="entry name" value="UVRD_HELICASE_CTER"/>
    <property type="match status" value="1"/>
</dbReference>
<accession>Q99VC3</accession>
<evidence type="ECO:0000255" key="1">
    <source>
        <dbReference type="HAMAP-Rule" id="MF_01451"/>
    </source>
</evidence>
<keyword id="KW-0067">ATP-binding</keyword>
<keyword id="KW-0227">DNA damage</keyword>
<keyword id="KW-0234">DNA repair</keyword>
<keyword id="KW-0238">DNA-binding</keyword>
<keyword id="KW-0269">Exonuclease</keyword>
<keyword id="KW-0347">Helicase</keyword>
<keyword id="KW-0378">Hydrolase</keyword>
<keyword id="KW-0413">Isomerase</keyword>
<keyword id="KW-0540">Nuclease</keyword>
<keyword id="KW-0547">Nucleotide-binding</keyword>
<protein>
    <recommendedName>
        <fullName evidence="1">ATP-dependent helicase/nuclease subunit A</fullName>
        <ecNumber evidence="1">3.1.-.-</ecNumber>
        <ecNumber evidence="1">5.6.2.4</ecNumber>
    </recommendedName>
    <alternativeName>
        <fullName evidence="1">ATP-dependent helicase/nuclease AddA</fullName>
    </alternativeName>
    <alternativeName>
        <fullName evidence="1">DNA 3'-5' helicase AddA</fullName>
    </alternativeName>
</protein>
<reference key="1">
    <citation type="journal article" date="2001" name="Lancet">
        <title>Whole genome sequencing of meticillin-resistant Staphylococcus aureus.</title>
        <authorList>
            <person name="Kuroda M."/>
            <person name="Ohta T."/>
            <person name="Uchiyama I."/>
            <person name="Baba T."/>
            <person name="Yuzawa H."/>
            <person name="Kobayashi I."/>
            <person name="Cui L."/>
            <person name="Oguchi A."/>
            <person name="Aoki K."/>
            <person name="Nagai Y."/>
            <person name="Lian J.-Q."/>
            <person name="Ito T."/>
            <person name="Kanamori M."/>
            <person name="Matsumaru H."/>
            <person name="Maruyama A."/>
            <person name="Murakami H."/>
            <person name="Hosoyama A."/>
            <person name="Mizutani-Ui Y."/>
            <person name="Takahashi N.K."/>
            <person name="Sawano T."/>
            <person name="Inoue R."/>
            <person name="Kaito C."/>
            <person name="Sekimizu K."/>
            <person name="Hirakawa H."/>
            <person name="Kuhara S."/>
            <person name="Goto S."/>
            <person name="Yabuzaki J."/>
            <person name="Kanehisa M."/>
            <person name="Yamashita A."/>
            <person name="Oshima K."/>
            <person name="Furuya K."/>
            <person name="Yoshino C."/>
            <person name="Shiba T."/>
            <person name="Hattori M."/>
            <person name="Ogasawara N."/>
            <person name="Hayashi H."/>
            <person name="Hiramatsu K."/>
        </authorList>
    </citation>
    <scope>NUCLEOTIDE SEQUENCE [LARGE SCALE GENOMIC DNA]</scope>
    <source>
        <strain>Mu50 / ATCC 700699</strain>
    </source>
</reference>
<proteinExistence type="inferred from homology"/>
<feature type="chain" id="PRO_0000379314" description="ATP-dependent helicase/nuclease subunit A">
    <location>
        <begin position="1"/>
        <end position="1217"/>
    </location>
</feature>
<feature type="domain" description="UvrD-like helicase ATP-binding" evidence="1">
    <location>
        <begin position="10"/>
        <end position="475"/>
    </location>
</feature>
<feature type="domain" description="UvrD-like helicase C-terminal" evidence="1">
    <location>
        <begin position="476"/>
        <end position="786"/>
    </location>
</feature>
<feature type="binding site" evidence="1">
    <location>
        <begin position="31"/>
        <end position="38"/>
    </location>
    <ligand>
        <name>ATP</name>
        <dbReference type="ChEBI" id="CHEBI:30616"/>
    </ligand>
</feature>
<comment type="function">
    <text evidence="1">The heterodimer acts as both an ATP-dependent DNA helicase and an ATP-dependent, dual-direction single-stranded exonuclease. Recognizes the chi site generating a DNA molecule suitable for the initiation of homologous recombination. The AddA nuclease domain is required for chi fragment generation; this subunit has the helicase and 3' -&gt; 5' nuclease activities.</text>
</comment>
<comment type="catalytic activity">
    <reaction evidence="1">
        <text>Couples ATP hydrolysis with the unwinding of duplex DNA by translocating in the 3'-5' direction.</text>
        <dbReference type="EC" id="5.6.2.4"/>
    </reaction>
</comment>
<comment type="catalytic activity">
    <reaction evidence="1">
        <text>ATP + H2O = ADP + phosphate + H(+)</text>
        <dbReference type="Rhea" id="RHEA:13065"/>
        <dbReference type="ChEBI" id="CHEBI:15377"/>
        <dbReference type="ChEBI" id="CHEBI:15378"/>
        <dbReference type="ChEBI" id="CHEBI:30616"/>
        <dbReference type="ChEBI" id="CHEBI:43474"/>
        <dbReference type="ChEBI" id="CHEBI:456216"/>
        <dbReference type="EC" id="5.6.2.4"/>
    </reaction>
</comment>
<comment type="cofactor">
    <cofactor evidence="1">
        <name>Mg(2+)</name>
        <dbReference type="ChEBI" id="CHEBI:18420"/>
    </cofactor>
</comment>
<comment type="subunit">
    <text evidence="1">Heterodimer of AddA and AddB/RexB.</text>
</comment>
<comment type="similarity">
    <text evidence="1">Belongs to the helicase family. AddA subfamily.</text>
</comment>
<sequence>MTIPEKPQGVIWTDAQWQSIYATGQDVLVAAAAGSGKTAVLVERIIQKILRDGIDVDRLLVVTFTNLSAREMKHRVDQRIQEASIADPANAHLKNQRIKIHQAQISTLHSFCLKLIQQHYDVLNIDPNFRTSSEAENILLLEQTIDEVIEQHYDILDPAFIELTEQLSSDRSDDQFRMIIKQLYFFSVANPNPTNWLDQLVTPYEEEAQQAQLIQLLTDLSKVFITAAYDALNKAYDLFSMMDGVDKHLAVIEDERRLMGRVLEGGFIDIPYLTDHEFGARLPNVTAKIKEANEMMVDALEDAKLQYKKYKSLIDKVKNDYFSREADDLKADMQQLAPRVKYLARIVKDVMSEFNRKKRSKNILDFSDYEHFALQILTNEDGSPSEIAESYRQHFQEILVDEYQDTNRVQEKILSCIKTGDEHNGNLFMVGDVKQSIYKFRQADPSLFIEKYQRFTIDGDGTGRRIDLSQNFRSRKEVLSTTNYIFKHMMDEQVGEVKYDEAAQLYYGAPYDESDHPVNLKVLVEADQEHSDLTGSEQEAHFIVEQVKDILEHQKVYDMKTGSYRSATYKDIVILERSFGQARNLQQAFKNEDIPFHVNSREGYFEQTEVRLVLSFLRAIDNPLQDIYLVGLMRSVIYQFKEDELAQIRILSPNDDYFYQSIVNYINDEAADAILVDKLKMFLSDIQSYQQYSKDHPVYQLIDKFYNDHYVIQYFSGLIGGRGRRANLYGLFNKAIEFENSSFRGLYQFIRFIDELIERGKDFGEENVVGPNDNVVRMMTIHSSKGLEFPFVIYSGLSKDFNKRDLKQPVILNQQFGLGMDYFDVDKEMAFPSLASVAYKAVAEKELVSEEMRLVYVALTRAKEQLYLIGRVKNDKSLLELEQLSISGEHIAVNERLTSPNPFHLIYSILSKHQSASIPDDLKFEKDIAQVEDSSRPNVNISIIYFEDVSTETILDNNEYRSVNQLETMQNGNEDVKAQIKHQLDYQYPYVNDTKKPSKQSVSELKRQYETEESGTSYERVRQYRIGFSTYERPKFLSEQGKRKANEIGTLMHTVMQHLPFKKERISEVELHQYIDGLIDKHIIEADAKKDIRMDEIMTFINSELYSIIAEAEQVYRELPFVVNQALVDQLPQGDEDVSIIQGMIDLIFVKDGVHYFVDYKTDAFNRRRGMTDEEIGTQLKNKYKIQMKYYQNTLQTILNKEVKGYLYFFKFGTLQL</sequence>
<gene>
    <name evidence="1" type="primary">addA</name>
    <name type="ordered locus">SAV0967</name>
</gene>
<organism>
    <name type="scientific">Staphylococcus aureus (strain Mu50 / ATCC 700699)</name>
    <dbReference type="NCBI Taxonomy" id="158878"/>
    <lineage>
        <taxon>Bacteria</taxon>
        <taxon>Bacillati</taxon>
        <taxon>Bacillota</taxon>
        <taxon>Bacilli</taxon>
        <taxon>Bacillales</taxon>
        <taxon>Staphylococcaceae</taxon>
        <taxon>Staphylococcus</taxon>
    </lineage>
</organism>
<name>ADDA_STAAM</name>